<reference key="1">
    <citation type="journal article" date="2005" name="Science">
        <title>Genome sequence of the PCE-dechlorinating bacterium Dehalococcoides ethenogenes.</title>
        <authorList>
            <person name="Seshadri R."/>
            <person name="Adrian L."/>
            <person name="Fouts D.E."/>
            <person name="Eisen J.A."/>
            <person name="Phillippy A.M."/>
            <person name="Methe B.A."/>
            <person name="Ward N.L."/>
            <person name="Nelson W.C."/>
            <person name="DeBoy R.T."/>
            <person name="Khouri H.M."/>
            <person name="Kolonay J.F."/>
            <person name="Dodson R.J."/>
            <person name="Daugherty S.C."/>
            <person name="Brinkac L.M."/>
            <person name="Sullivan S.A."/>
            <person name="Madupu R."/>
            <person name="Nelson K.E."/>
            <person name="Kang K.H."/>
            <person name="Impraim M."/>
            <person name="Tran K."/>
            <person name="Robinson J.M."/>
            <person name="Forberger H.A."/>
            <person name="Fraser C.M."/>
            <person name="Zinder S.H."/>
            <person name="Heidelberg J.F."/>
        </authorList>
    </citation>
    <scope>NUCLEOTIDE SEQUENCE [LARGE SCALE GENOMIC DNA]</scope>
    <source>
        <strain>ATCC BAA-2266 / KCTC 15142 / 195</strain>
    </source>
</reference>
<protein>
    <recommendedName>
        <fullName evidence="1">Glycerol-3-phosphate acyltransferase 3</fullName>
    </recommendedName>
    <alternativeName>
        <fullName evidence="1">Acyl-PO4 G3P acyltransferase 3</fullName>
    </alternativeName>
    <alternativeName>
        <fullName evidence="1">Acyl-phosphate--glycerol-3-phosphate acyltransferase 3</fullName>
    </alternativeName>
    <alternativeName>
        <fullName evidence="1">G3P acyltransferase 3</fullName>
        <shortName evidence="1">GPAT 3</shortName>
        <ecNumber evidence="1">2.3.1.275</ecNumber>
    </alternativeName>
    <alternativeName>
        <fullName evidence="1">Lysophosphatidic acid synthase 3</fullName>
        <shortName evidence="1">LPA synthase 3</shortName>
    </alternativeName>
</protein>
<name>PLSY3_DEHM1</name>
<evidence type="ECO:0000255" key="1">
    <source>
        <dbReference type="HAMAP-Rule" id="MF_01043"/>
    </source>
</evidence>
<dbReference type="EC" id="2.3.1.275" evidence="1"/>
<dbReference type="EMBL" id="CP000027">
    <property type="protein sequence ID" value="AAW39354.1"/>
    <property type="molecule type" value="Genomic_DNA"/>
</dbReference>
<dbReference type="SMR" id="Q3Z6P4"/>
<dbReference type="FunCoup" id="Q3Z6P4">
    <property type="interactions" value="150"/>
</dbReference>
<dbReference type="STRING" id="243164.DET1396"/>
<dbReference type="GeneID" id="3229313"/>
<dbReference type="KEGG" id="det:DET1396"/>
<dbReference type="eggNOG" id="COG0344">
    <property type="taxonomic scope" value="Bacteria"/>
</dbReference>
<dbReference type="HOGENOM" id="CLU_081254_7_1_0"/>
<dbReference type="InParanoid" id="Q3Z6P4"/>
<dbReference type="UniPathway" id="UPA00085"/>
<dbReference type="Proteomes" id="UP000008289">
    <property type="component" value="Chromosome"/>
</dbReference>
<dbReference type="GO" id="GO:0005886">
    <property type="term" value="C:plasma membrane"/>
    <property type="evidence" value="ECO:0007669"/>
    <property type="project" value="UniProtKB-SubCell"/>
</dbReference>
<dbReference type="GO" id="GO:0043772">
    <property type="term" value="F:acyl-phosphate glycerol-3-phosphate acyltransferase activity"/>
    <property type="evidence" value="ECO:0007669"/>
    <property type="project" value="UniProtKB-UniRule"/>
</dbReference>
<dbReference type="GO" id="GO:0008654">
    <property type="term" value="P:phospholipid biosynthetic process"/>
    <property type="evidence" value="ECO:0007669"/>
    <property type="project" value="UniProtKB-UniRule"/>
</dbReference>
<dbReference type="HAMAP" id="MF_01043">
    <property type="entry name" value="PlsY"/>
    <property type="match status" value="1"/>
</dbReference>
<dbReference type="InterPro" id="IPR003811">
    <property type="entry name" value="G3P_acylTferase_PlsY"/>
</dbReference>
<dbReference type="NCBIfam" id="TIGR00023">
    <property type="entry name" value="glycerol-3-phosphate 1-O-acyltransferase PlsY"/>
    <property type="match status" value="1"/>
</dbReference>
<dbReference type="PANTHER" id="PTHR30309:SF0">
    <property type="entry name" value="GLYCEROL-3-PHOSPHATE ACYLTRANSFERASE-RELATED"/>
    <property type="match status" value="1"/>
</dbReference>
<dbReference type="PANTHER" id="PTHR30309">
    <property type="entry name" value="INNER MEMBRANE PROTEIN YGIH"/>
    <property type="match status" value="1"/>
</dbReference>
<dbReference type="Pfam" id="PF02660">
    <property type="entry name" value="G3P_acyltransf"/>
    <property type="match status" value="1"/>
</dbReference>
<dbReference type="SMART" id="SM01207">
    <property type="entry name" value="G3P_acyltransf"/>
    <property type="match status" value="1"/>
</dbReference>
<sequence>MLIAKLLLVVIVSYLLGSIPFGYLVSHRGSKIDIRSYGSGRTGATNVLRTMGRKAALLVAALDVVKGVSAVAFAGLVIGTEALTFGTNGMAILFAQVLAGLAAVAGHIWPVFLKFRGGRGVATFFGGMIALCPVAAIFGGEVLIIGAGLSGFASLGSITGVVGAYALLIPLTFISGFPTEYIVYAVLGSLLITIMHRDNIKRLLAGKERKLNEKSR</sequence>
<gene>
    <name evidence="1" type="primary">plsY3</name>
    <name type="ordered locus">DET1396</name>
</gene>
<accession>Q3Z6P4</accession>
<proteinExistence type="inferred from homology"/>
<keyword id="KW-1003">Cell membrane</keyword>
<keyword id="KW-0444">Lipid biosynthesis</keyword>
<keyword id="KW-0443">Lipid metabolism</keyword>
<keyword id="KW-0472">Membrane</keyword>
<keyword id="KW-0594">Phospholipid biosynthesis</keyword>
<keyword id="KW-1208">Phospholipid metabolism</keyword>
<keyword id="KW-0808">Transferase</keyword>
<keyword id="KW-0812">Transmembrane</keyword>
<keyword id="KW-1133">Transmembrane helix</keyword>
<comment type="function">
    <text evidence="1">Catalyzes the transfer of an acyl group from acyl-phosphate (acyl-PO(4)) to glycerol-3-phosphate (G3P) to form lysophosphatidic acid (LPA). This enzyme utilizes acyl-phosphate as fatty acyl donor, but not acyl-CoA or acyl-ACP.</text>
</comment>
<comment type="catalytic activity">
    <reaction evidence="1">
        <text>an acyl phosphate + sn-glycerol 3-phosphate = a 1-acyl-sn-glycero-3-phosphate + phosphate</text>
        <dbReference type="Rhea" id="RHEA:34075"/>
        <dbReference type="ChEBI" id="CHEBI:43474"/>
        <dbReference type="ChEBI" id="CHEBI:57597"/>
        <dbReference type="ChEBI" id="CHEBI:57970"/>
        <dbReference type="ChEBI" id="CHEBI:59918"/>
        <dbReference type="EC" id="2.3.1.275"/>
    </reaction>
</comment>
<comment type="pathway">
    <text evidence="1">Lipid metabolism; phospholipid metabolism.</text>
</comment>
<comment type="subunit">
    <text evidence="1">Probably interacts with PlsX.</text>
</comment>
<comment type="subcellular location">
    <subcellularLocation>
        <location evidence="1">Cell membrane</location>
        <topology evidence="1">Multi-pass membrane protein</topology>
    </subcellularLocation>
</comment>
<comment type="similarity">
    <text evidence="1">Belongs to the PlsY family.</text>
</comment>
<feature type="chain" id="PRO_0000188351" description="Glycerol-3-phosphate acyltransferase 3">
    <location>
        <begin position="1"/>
        <end position="216"/>
    </location>
</feature>
<feature type="transmembrane region" description="Helical" evidence="1">
    <location>
        <begin position="6"/>
        <end position="26"/>
    </location>
</feature>
<feature type="transmembrane region" description="Helical" evidence="1">
    <location>
        <begin position="58"/>
        <end position="78"/>
    </location>
</feature>
<feature type="transmembrane region" description="Helical" evidence="1">
    <location>
        <begin position="92"/>
        <end position="112"/>
    </location>
</feature>
<feature type="transmembrane region" description="Helical" evidence="1">
    <location>
        <begin position="125"/>
        <end position="145"/>
    </location>
</feature>
<feature type="transmembrane region" description="Helical" evidence="1">
    <location>
        <begin position="158"/>
        <end position="178"/>
    </location>
</feature>
<organism>
    <name type="scientific">Dehalococcoides mccartyi (strain ATCC BAA-2266 / KCTC 15142 / 195)</name>
    <name type="common">Dehalococcoides ethenogenes (strain 195)</name>
    <dbReference type="NCBI Taxonomy" id="243164"/>
    <lineage>
        <taxon>Bacteria</taxon>
        <taxon>Bacillati</taxon>
        <taxon>Chloroflexota</taxon>
        <taxon>Dehalococcoidia</taxon>
        <taxon>Dehalococcoidales</taxon>
        <taxon>Dehalococcoidaceae</taxon>
        <taxon>Dehalococcoides</taxon>
    </lineage>
</organism>